<protein>
    <recommendedName>
        <fullName evidence="1">Arginine biosynthesis bifunctional protein ArgJ</fullName>
    </recommendedName>
    <domain>
        <recommendedName>
            <fullName evidence="1">Glutamate N-acetyltransferase</fullName>
            <ecNumber evidence="1">2.3.1.35</ecNumber>
        </recommendedName>
        <alternativeName>
            <fullName evidence="1">Ornithine acetyltransferase</fullName>
            <shortName evidence="1">OATase</shortName>
        </alternativeName>
        <alternativeName>
            <fullName evidence="1">Ornithine transacetylase</fullName>
        </alternativeName>
    </domain>
    <domain>
        <recommendedName>
            <fullName evidence="1">Amino-acid acetyltransferase</fullName>
            <ecNumber evidence="1">2.3.1.1</ecNumber>
        </recommendedName>
        <alternativeName>
            <fullName evidence="1">N-acetylglutamate synthase</fullName>
            <shortName evidence="1">AGSase</shortName>
        </alternativeName>
    </domain>
    <component>
        <recommendedName>
            <fullName evidence="1">Arginine biosynthesis bifunctional protein ArgJ alpha chain</fullName>
        </recommendedName>
    </component>
    <component>
        <recommendedName>
            <fullName evidence="1">Arginine biosynthesis bifunctional protein ArgJ beta chain</fullName>
        </recommendedName>
    </component>
</protein>
<dbReference type="EC" id="2.3.1.35" evidence="1"/>
<dbReference type="EC" id="2.3.1.1" evidence="1"/>
<dbReference type="EMBL" id="BX571657">
    <property type="protein sequence ID" value="CAE09480.1"/>
    <property type="molecule type" value="Genomic_DNA"/>
</dbReference>
<dbReference type="RefSeq" id="WP_011138280.1">
    <property type="nucleotide sequence ID" value="NC_005090.1"/>
</dbReference>
<dbReference type="SMR" id="Q7MAC9"/>
<dbReference type="STRING" id="273121.WS0330"/>
<dbReference type="MEROPS" id="T05.002"/>
<dbReference type="KEGG" id="wsu:WS0330"/>
<dbReference type="eggNOG" id="COG1364">
    <property type="taxonomic scope" value="Bacteria"/>
</dbReference>
<dbReference type="HOGENOM" id="CLU_027172_1_0_7"/>
<dbReference type="UniPathway" id="UPA00068">
    <property type="reaction ID" value="UER00106"/>
</dbReference>
<dbReference type="UniPathway" id="UPA00068">
    <property type="reaction ID" value="UER00111"/>
</dbReference>
<dbReference type="Proteomes" id="UP000000422">
    <property type="component" value="Chromosome"/>
</dbReference>
<dbReference type="GO" id="GO:0005737">
    <property type="term" value="C:cytoplasm"/>
    <property type="evidence" value="ECO:0007669"/>
    <property type="project" value="UniProtKB-SubCell"/>
</dbReference>
<dbReference type="GO" id="GO:0004358">
    <property type="term" value="F:glutamate N-acetyltransferase activity"/>
    <property type="evidence" value="ECO:0007669"/>
    <property type="project" value="UniProtKB-UniRule"/>
</dbReference>
<dbReference type="GO" id="GO:0004042">
    <property type="term" value="F:L-glutamate N-acetyltransferase activity"/>
    <property type="evidence" value="ECO:0007669"/>
    <property type="project" value="UniProtKB-UniRule"/>
</dbReference>
<dbReference type="GO" id="GO:0006526">
    <property type="term" value="P:L-arginine biosynthetic process"/>
    <property type="evidence" value="ECO:0007669"/>
    <property type="project" value="UniProtKB-UniRule"/>
</dbReference>
<dbReference type="GO" id="GO:0006592">
    <property type="term" value="P:ornithine biosynthetic process"/>
    <property type="evidence" value="ECO:0007669"/>
    <property type="project" value="TreeGrafter"/>
</dbReference>
<dbReference type="CDD" id="cd02152">
    <property type="entry name" value="OAT"/>
    <property type="match status" value="1"/>
</dbReference>
<dbReference type="FunFam" id="3.10.20.340:FF:000003">
    <property type="entry name" value="Arginine biosynthesis bifunctional protein ArgJ"/>
    <property type="match status" value="1"/>
</dbReference>
<dbReference type="Gene3D" id="3.10.20.340">
    <property type="entry name" value="ArgJ beta chain, C-terminal domain"/>
    <property type="match status" value="1"/>
</dbReference>
<dbReference type="Gene3D" id="3.60.70.12">
    <property type="entry name" value="L-amino peptidase D-ALA esterase/amidase"/>
    <property type="match status" value="1"/>
</dbReference>
<dbReference type="HAMAP" id="MF_01106">
    <property type="entry name" value="ArgJ"/>
    <property type="match status" value="1"/>
</dbReference>
<dbReference type="InterPro" id="IPR002813">
    <property type="entry name" value="Arg_biosynth_ArgJ"/>
</dbReference>
<dbReference type="InterPro" id="IPR016117">
    <property type="entry name" value="ArgJ-like_dom_sf"/>
</dbReference>
<dbReference type="InterPro" id="IPR042195">
    <property type="entry name" value="ArgJ_beta_C"/>
</dbReference>
<dbReference type="NCBIfam" id="TIGR00120">
    <property type="entry name" value="ArgJ"/>
    <property type="match status" value="1"/>
</dbReference>
<dbReference type="NCBIfam" id="NF003802">
    <property type="entry name" value="PRK05388.1"/>
    <property type="match status" value="1"/>
</dbReference>
<dbReference type="PANTHER" id="PTHR23100">
    <property type="entry name" value="ARGININE BIOSYNTHESIS BIFUNCTIONAL PROTEIN ARGJ"/>
    <property type="match status" value="1"/>
</dbReference>
<dbReference type="PANTHER" id="PTHR23100:SF0">
    <property type="entry name" value="ARGININE BIOSYNTHESIS BIFUNCTIONAL PROTEIN ARGJ, MITOCHONDRIAL"/>
    <property type="match status" value="1"/>
</dbReference>
<dbReference type="Pfam" id="PF01960">
    <property type="entry name" value="ArgJ"/>
    <property type="match status" value="1"/>
</dbReference>
<dbReference type="SUPFAM" id="SSF56266">
    <property type="entry name" value="DmpA/ArgJ-like"/>
    <property type="match status" value="1"/>
</dbReference>
<organism>
    <name type="scientific">Wolinella succinogenes (strain ATCC 29543 / DSM 1740 / CCUG 13145 / JCM 31913 / LMG 7466 / NCTC 11488 / FDC 602W)</name>
    <name type="common">Vibrio succinogenes</name>
    <dbReference type="NCBI Taxonomy" id="273121"/>
    <lineage>
        <taxon>Bacteria</taxon>
        <taxon>Pseudomonadati</taxon>
        <taxon>Campylobacterota</taxon>
        <taxon>Epsilonproteobacteria</taxon>
        <taxon>Campylobacterales</taxon>
        <taxon>Helicobacteraceae</taxon>
        <taxon>Wolinella</taxon>
    </lineage>
</organism>
<feature type="chain" id="PRO_0000002265" description="Arginine biosynthesis bifunctional protein ArgJ alpha chain" evidence="1">
    <location>
        <begin position="1"/>
        <end position="187"/>
    </location>
</feature>
<feature type="chain" id="PRO_0000002266" description="Arginine biosynthesis bifunctional protein ArgJ beta chain" evidence="1">
    <location>
        <begin position="188"/>
        <end position="396"/>
    </location>
</feature>
<feature type="active site" description="Nucleophile" evidence="1">
    <location>
        <position position="188"/>
    </location>
</feature>
<feature type="binding site" evidence="1">
    <location>
        <position position="150"/>
    </location>
    <ligand>
        <name>substrate</name>
    </ligand>
</feature>
<feature type="binding site" evidence="1">
    <location>
        <position position="177"/>
    </location>
    <ligand>
        <name>substrate</name>
    </ligand>
</feature>
<feature type="binding site" evidence="1">
    <location>
        <position position="188"/>
    </location>
    <ligand>
        <name>substrate</name>
    </ligand>
</feature>
<feature type="binding site" evidence="1">
    <location>
        <position position="267"/>
    </location>
    <ligand>
        <name>substrate</name>
    </ligand>
</feature>
<feature type="binding site" evidence="1">
    <location>
        <position position="391"/>
    </location>
    <ligand>
        <name>substrate</name>
    </ligand>
</feature>
<feature type="binding site" evidence="1">
    <location>
        <position position="396"/>
    </location>
    <ligand>
        <name>substrate</name>
    </ligand>
</feature>
<feature type="site" description="Involved in the stabilization of negative charge on the oxyanion by the formation of the oxyanion hole" evidence="1">
    <location>
        <position position="115"/>
    </location>
</feature>
<feature type="site" description="Involved in the stabilization of negative charge on the oxyanion by the formation of the oxyanion hole" evidence="1">
    <location>
        <position position="116"/>
    </location>
</feature>
<feature type="site" description="Cleavage; by autolysis" evidence="1">
    <location>
        <begin position="187"/>
        <end position="188"/>
    </location>
</feature>
<proteinExistence type="inferred from homology"/>
<gene>
    <name evidence="1" type="primary">argJ</name>
    <name type="ordered locus">WS0330</name>
</gene>
<comment type="function">
    <text evidence="1">Catalyzes two activities which are involved in the cyclic version of arginine biosynthesis: the synthesis of N-acetylglutamate from glutamate and acetyl-CoA as the acetyl donor, and of ornithine by transacetylation between N(2)-acetylornithine and glutamate.</text>
</comment>
<comment type="catalytic activity">
    <reaction evidence="1">
        <text>N(2)-acetyl-L-ornithine + L-glutamate = N-acetyl-L-glutamate + L-ornithine</text>
        <dbReference type="Rhea" id="RHEA:15349"/>
        <dbReference type="ChEBI" id="CHEBI:29985"/>
        <dbReference type="ChEBI" id="CHEBI:44337"/>
        <dbReference type="ChEBI" id="CHEBI:46911"/>
        <dbReference type="ChEBI" id="CHEBI:57805"/>
        <dbReference type="EC" id="2.3.1.35"/>
    </reaction>
</comment>
<comment type="catalytic activity">
    <reaction evidence="1">
        <text>L-glutamate + acetyl-CoA = N-acetyl-L-glutamate + CoA + H(+)</text>
        <dbReference type="Rhea" id="RHEA:24292"/>
        <dbReference type="ChEBI" id="CHEBI:15378"/>
        <dbReference type="ChEBI" id="CHEBI:29985"/>
        <dbReference type="ChEBI" id="CHEBI:44337"/>
        <dbReference type="ChEBI" id="CHEBI:57287"/>
        <dbReference type="ChEBI" id="CHEBI:57288"/>
        <dbReference type="EC" id="2.3.1.1"/>
    </reaction>
</comment>
<comment type="pathway">
    <text evidence="1">Amino-acid biosynthesis; L-arginine biosynthesis; L-ornithine and N-acetyl-L-glutamate from L-glutamate and N(2)-acetyl-L-ornithine (cyclic): step 1/1.</text>
</comment>
<comment type="pathway">
    <text evidence="1">Amino-acid biosynthesis; L-arginine biosynthesis; N(2)-acetyl-L-ornithine from L-glutamate: step 1/4.</text>
</comment>
<comment type="subunit">
    <text evidence="1">Heterotetramer of two alpha and two beta chains.</text>
</comment>
<comment type="subcellular location">
    <subcellularLocation>
        <location evidence="1">Cytoplasm</location>
    </subcellularLocation>
</comment>
<comment type="similarity">
    <text evidence="1">Belongs to the ArgJ family.</text>
</comment>
<accession>Q7MAC9</accession>
<reference key="1">
    <citation type="journal article" date="2003" name="Proc. Natl. Acad. Sci. U.S.A.">
        <title>Complete genome sequence and analysis of Wolinella succinogenes.</title>
        <authorList>
            <person name="Baar C."/>
            <person name="Eppinger M."/>
            <person name="Raddatz G."/>
            <person name="Simon J."/>
            <person name="Lanz C."/>
            <person name="Klimmek O."/>
            <person name="Nandakumar R."/>
            <person name="Gross R."/>
            <person name="Rosinus A."/>
            <person name="Keller H."/>
            <person name="Jagtap P."/>
            <person name="Linke B."/>
            <person name="Meyer F."/>
            <person name="Lederer H."/>
            <person name="Schuster S.C."/>
        </authorList>
    </citation>
    <scope>NUCLEOTIDE SEQUENCE [LARGE SCALE GENOMIC DNA]</scope>
    <source>
        <strain>ATCC 29543 / DSM 1740 / CCUG 13145 / JCM 31913 / LMG 7466 / NCTC 11488 / FDC 602W</strain>
    </source>
</reference>
<keyword id="KW-0012">Acyltransferase</keyword>
<keyword id="KW-0028">Amino-acid biosynthesis</keyword>
<keyword id="KW-0055">Arginine biosynthesis</keyword>
<keyword id="KW-0068">Autocatalytic cleavage</keyword>
<keyword id="KW-0963">Cytoplasm</keyword>
<keyword id="KW-0511">Multifunctional enzyme</keyword>
<keyword id="KW-1185">Reference proteome</keyword>
<keyword id="KW-0808">Transferase</keyword>
<name>ARGJ_WOLSU</name>
<evidence type="ECO:0000255" key="1">
    <source>
        <dbReference type="HAMAP-Rule" id="MF_01106"/>
    </source>
</evidence>
<sequence>MFDLFPIHGGVCAPEGFSADGIAAGLKKEGKLDVAFVHSLFPAKVSALFTTNRFAAAPIRYFQGLGEVFDCNFVLINAKNANAMTGAEGIEDIEWLMERLKHRFPSLVNPVMSSTGVIGARLPKEKIEASLGEIVLGKKEGARAAQAIMTTDAFSKEVAFKVELPDGRSFCIGAMAKGAGMIDPAMATMLCFITTDADVPENRMKELLQKAVHTTFNAISVDGDTSTNDTVMLFSNKASGVYEEEAFLMALERVMHKLATDVARDGEGAKKLVAFEVSGAASEEEAIKAAKALTTSLLVKTAIFGEDPNWGRIASTIGSSGVECDENRLRISFGEVLVYDRGAILFDKTIEEKAASVMRQESFKIHCDLGIGRGKFTAYGCDLGYEYVKINADYRT</sequence>